<evidence type="ECO:0000250" key="1"/>
<evidence type="ECO:0000250" key="2">
    <source>
        <dbReference type="UniProtKB" id="P17858"/>
    </source>
</evidence>
<evidence type="ECO:0000250" key="3">
    <source>
        <dbReference type="UniProtKB" id="P47857"/>
    </source>
</evidence>
<evidence type="ECO:0000255" key="4">
    <source>
        <dbReference type="HAMAP-Rule" id="MF_03184"/>
    </source>
</evidence>
<evidence type="ECO:0000269" key="5">
    <source>
    </source>
</evidence>
<evidence type="ECO:0000305" key="6"/>
<evidence type="ECO:0000312" key="7">
    <source>
        <dbReference type="MGI" id="MGI:97547"/>
    </source>
</evidence>
<evidence type="ECO:0007744" key="8">
    <source>
    </source>
</evidence>
<evidence type="ECO:0007744" key="9">
    <source>
    </source>
</evidence>
<gene>
    <name evidence="7" type="primary">Pfkl</name>
    <name type="synonym">Pfk-l</name>
    <name type="synonym">Pfkb</name>
</gene>
<proteinExistence type="evidence at protein level"/>
<reference key="1">
    <citation type="journal article" date="1988" name="J. Biol. Chem.">
        <title>Liver (B-type) phosphofructokinase mRNA. Cloning, structure, and expression.</title>
        <authorList>
            <person name="Gehnrich S.C."/>
            <person name="Gekakis N."/>
            <person name="Sul H.S."/>
        </authorList>
    </citation>
    <scope>NUCLEOTIDE SEQUENCE [MRNA]</scope>
    <source>
        <tissue>Liver</tissue>
    </source>
</reference>
<reference key="2">
    <citation type="journal article" date="2005" name="Science">
        <title>The transcriptional landscape of the mammalian genome.</title>
        <authorList>
            <person name="Carninci P."/>
            <person name="Kasukawa T."/>
            <person name="Katayama S."/>
            <person name="Gough J."/>
            <person name="Frith M.C."/>
            <person name="Maeda N."/>
            <person name="Oyama R."/>
            <person name="Ravasi T."/>
            <person name="Lenhard B."/>
            <person name="Wells C."/>
            <person name="Kodzius R."/>
            <person name="Shimokawa K."/>
            <person name="Bajic V.B."/>
            <person name="Brenner S.E."/>
            <person name="Batalov S."/>
            <person name="Forrest A.R."/>
            <person name="Zavolan M."/>
            <person name="Davis M.J."/>
            <person name="Wilming L.G."/>
            <person name="Aidinis V."/>
            <person name="Allen J.E."/>
            <person name="Ambesi-Impiombato A."/>
            <person name="Apweiler R."/>
            <person name="Aturaliya R.N."/>
            <person name="Bailey T.L."/>
            <person name="Bansal M."/>
            <person name="Baxter L."/>
            <person name="Beisel K.W."/>
            <person name="Bersano T."/>
            <person name="Bono H."/>
            <person name="Chalk A.M."/>
            <person name="Chiu K.P."/>
            <person name="Choudhary V."/>
            <person name="Christoffels A."/>
            <person name="Clutterbuck D.R."/>
            <person name="Crowe M.L."/>
            <person name="Dalla E."/>
            <person name="Dalrymple B.P."/>
            <person name="de Bono B."/>
            <person name="Della Gatta G."/>
            <person name="di Bernardo D."/>
            <person name="Down T."/>
            <person name="Engstrom P."/>
            <person name="Fagiolini M."/>
            <person name="Faulkner G."/>
            <person name="Fletcher C.F."/>
            <person name="Fukushima T."/>
            <person name="Furuno M."/>
            <person name="Futaki S."/>
            <person name="Gariboldi M."/>
            <person name="Georgii-Hemming P."/>
            <person name="Gingeras T.R."/>
            <person name="Gojobori T."/>
            <person name="Green R.E."/>
            <person name="Gustincich S."/>
            <person name="Harbers M."/>
            <person name="Hayashi Y."/>
            <person name="Hensch T.K."/>
            <person name="Hirokawa N."/>
            <person name="Hill D."/>
            <person name="Huminiecki L."/>
            <person name="Iacono M."/>
            <person name="Ikeo K."/>
            <person name="Iwama A."/>
            <person name="Ishikawa T."/>
            <person name="Jakt M."/>
            <person name="Kanapin A."/>
            <person name="Katoh M."/>
            <person name="Kawasawa Y."/>
            <person name="Kelso J."/>
            <person name="Kitamura H."/>
            <person name="Kitano H."/>
            <person name="Kollias G."/>
            <person name="Krishnan S.P."/>
            <person name="Kruger A."/>
            <person name="Kummerfeld S.K."/>
            <person name="Kurochkin I.V."/>
            <person name="Lareau L.F."/>
            <person name="Lazarevic D."/>
            <person name="Lipovich L."/>
            <person name="Liu J."/>
            <person name="Liuni S."/>
            <person name="McWilliam S."/>
            <person name="Madan Babu M."/>
            <person name="Madera M."/>
            <person name="Marchionni L."/>
            <person name="Matsuda H."/>
            <person name="Matsuzawa S."/>
            <person name="Miki H."/>
            <person name="Mignone F."/>
            <person name="Miyake S."/>
            <person name="Morris K."/>
            <person name="Mottagui-Tabar S."/>
            <person name="Mulder N."/>
            <person name="Nakano N."/>
            <person name="Nakauchi H."/>
            <person name="Ng P."/>
            <person name="Nilsson R."/>
            <person name="Nishiguchi S."/>
            <person name="Nishikawa S."/>
            <person name="Nori F."/>
            <person name="Ohara O."/>
            <person name="Okazaki Y."/>
            <person name="Orlando V."/>
            <person name="Pang K.C."/>
            <person name="Pavan W.J."/>
            <person name="Pavesi G."/>
            <person name="Pesole G."/>
            <person name="Petrovsky N."/>
            <person name="Piazza S."/>
            <person name="Reed J."/>
            <person name="Reid J.F."/>
            <person name="Ring B.Z."/>
            <person name="Ringwald M."/>
            <person name="Rost B."/>
            <person name="Ruan Y."/>
            <person name="Salzberg S.L."/>
            <person name="Sandelin A."/>
            <person name="Schneider C."/>
            <person name="Schoenbach C."/>
            <person name="Sekiguchi K."/>
            <person name="Semple C.A."/>
            <person name="Seno S."/>
            <person name="Sessa L."/>
            <person name="Sheng Y."/>
            <person name="Shibata Y."/>
            <person name="Shimada H."/>
            <person name="Shimada K."/>
            <person name="Silva D."/>
            <person name="Sinclair B."/>
            <person name="Sperling S."/>
            <person name="Stupka E."/>
            <person name="Sugiura K."/>
            <person name="Sultana R."/>
            <person name="Takenaka Y."/>
            <person name="Taki K."/>
            <person name="Tammoja K."/>
            <person name="Tan S.L."/>
            <person name="Tang S."/>
            <person name="Taylor M.S."/>
            <person name="Tegner J."/>
            <person name="Teichmann S.A."/>
            <person name="Ueda H.R."/>
            <person name="van Nimwegen E."/>
            <person name="Verardo R."/>
            <person name="Wei C.L."/>
            <person name="Yagi K."/>
            <person name="Yamanishi H."/>
            <person name="Zabarovsky E."/>
            <person name="Zhu S."/>
            <person name="Zimmer A."/>
            <person name="Hide W."/>
            <person name="Bult C."/>
            <person name="Grimmond S.M."/>
            <person name="Teasdale R.D."/>
            <person name="Liu E.T."/>
            <person name="Brusic V."/>
            <person name="Quackenbush J."/>
            <person name="Wahlestedt C."/>
            <person name="Mattick J.S."/>
            <person name="Hume D.A."/>
            <person name="Kai C."/>
            <person name="Sasaki D."/>
            <person name="Tomaru Y."/>
            <person name="Fukuda S."/>
            <person name="Kanamori-Katayama M."/>
            <person name="Suzuki M."/>
            <person name="Aoki J."/>
            <person name="Arakawa T."/>
            <person name="Iida J."/>
            <person name="Imamura K."/>
            <person name="Itoh M."/>
            <person name="Kato T."/>
            <person name="Kawaji H."/>
            <person name="Kawagashira N."/>
            <person name="Kawashima T."/>
            <person name="Kojima M."/>
            <person name="Kondo S."/>
            <person name="Konno H."/>
            <person name="Nakano K."/>
            <person name="Ninomiya N."/>
            <person name="Nishio T."/>
            <person name="Okada M."/>
            <person name="Plessy C."/>
            <person name="Shibata K."/>
            <person name="Shiraki T."/>
            <person name="Suzuki S."/>
            <person name="Tagami M."/>
            <person name="Waki K."/>
            <person name="Watahiki A."/>
            <person name="Okamura-Oho Y."/>
            <person name="Suzuki H."/>
            <person name="Kawai J."/>
            <person name="Hayashizaki Y."/>
        </authorList>
    </citation>
    <scope>NUCLEOTIDE SEQUENCE [LARGE SCALE MRNA]</scope>
    <source>
        <strain>C57BL/6J</strain>
        <tissue>Cerebellum</tissue>
        <tissue>Head</tissue>
        <tissue>Pituitary</tissue>
    </source>
</reference>
<reference key="3">
    <citation type="submission" date="2005-09" db="EMBL/GenBank/DDBJ databases">
        <authorList>
            <person name="Mural R.J."/>
            <person name="Adams M.D."/>
            <person name="Myers E.W."/>
            <person name="Smith H.O."/>
            <person name="Venter J.C."/>
        </authorList>
    </citation>
    <scope>NUCLEOTIDE SEQUENCE [LARGE SCALE GENOMIC DNA]</scope>
</reference>
<reference key="4">
    <citation type="journal article" date="2004" name="Genome Res.">
        <title>The status, quality, and expansion of the NIH full-length cDNA project: the Mammalian Gene Collection (MGC).</title>
        <authorList>
            <consortium name="The MGC Project Team"/>
        </authorList>
    </citation>
    <scope>NUCLEOTIDE SEQUENCE [LARGE SCALE MRNA]</scope>
    <source>
        <strain>Czech II</strain>
        <tissue>Mammary tumor</tissue>
    </source>
</reference>
<reference key="5">
    <citation type="submission" date="2007-04" db="UniProtKB">
        <authorList>
            <person name="Lubec G."/>
            <person name="Kang S.U."/>
        </authorList>
    </citation>
    <scope>PROTEIN SEQUENCE OF 130-141; 257-269; 367-374; 655-672 AND 716-726</scope>
    <scope>IDENTIFICATION BY MASS SPECTROMETRY</scope>
    <source>
        <strain>C57BL/6J</strain>
        <tissue>Brain</tissue>
    </source>
</reference>
<reference key="6">
    <citation type="journal article" date="2008" name="J. Proteome Res.">
        <title>Large-scale identification and evolution indexing of tyrosine phosphorylation sites from murine brain.</title>
        <authorList>
            <person name="Ballif B.A."/>
            <person name="Carey G.R."/>
            <person name="Sunyaev S.R."/>
            <person name="Gygi S.P."/>
        </authorList>
    </citation>
    <scope>PHOSPHORYLATION [LARGE SCALE ANALYSIS] AT TYR-640</scope>
    <scope>IDENTIFICATION BY MASS SPECTROMETRY [LARGE SCALE ANALYSIS]</scope>
    <source>
        <tissue>Brain</tissue>
    </source>
</reference>
<reference key="7">
    <citation type="journal article" date="2009" name="Mol. Cell. Proteomics">
        <title>Large scale localization of protein phosphorylation by use of electron capture dissociation mass spectrometry.</title>
        <authorList>
            <person name="Sweet S.M."/>
            <person name="Bailey C.M."/>
            <person name="Cunningham D.L."/>
            <person name="Heath J.K."/>
            <person name="Cooper H.J."/>
        </authorList>
    </citation>
    <scope>PHOSPHORYLATION [LARGE SCALE ANALYSIS] AT SER-775</scope>
    <scope>IDENTIFICATION BY MASS SPECTROMETRY [LARGE SCALE ANALYSIS]</scope>
    <source>
        <tissue>Embryonic fibroblast</tissue>
    </source>
</reference>
<reference key="8">
    <citation type="journal article" date="2010" name="Cell">
        <title>A tissue-specific atlas of mouse protein phosphorylation and expression.</title>
        <authorList>
            <person name="Huttlin E.L."/>
            <person name="Jedrychowski M.P."/>
            <person name="Elias J.E."/>
            <person name="Goswami T."/>
            <person name="Rad R."/>
            <person name="Beausoleil S.A."/>
            <person name="Villen J."/>
            <person name="Haas W."/>
            <person name="Sowa M.E."/>
            <person name="Gygi S.P."/>
        </authorList>
    </citation>
    <scope>IDENTIFICATION BY MASS SPECTROMETRY [LARGE SCALE ANALYSIS]</scope>
    <source>
        <tissue>Brain</tissue>
        <tissue>Brown adipose tissue</tissue>
        <tissue>Heart</tissue>
        <tissue>Kidney</tissue>
        <tissue>Liver</tissue>
        <tissue>Lung</tissue>
        <tissue>Pancreas</tissue>
        <tissue>Spleen</tissue>
        <tissue>Testis</tissue>
    </source>
</reference>
<reference key="9">
    <citation type="journal article" date="2015" name="Nat. Commun.">
        <title>Functional genomics identifies negative regulatory nodes controlling phagocyte oxidative burst.</title>
        <authorList>
            <person name="Graham D.B."/>
            <person name="Becker C.E."/>
            <person name="Doan A."/>
            <person name="Goel G."/>
            <person name="Villablanca E.J."/>
            <person name="Knights D."/>
            <person name="Mok A."/>
            <person name="Ng A.C."/>
            <person name="Doench J.G."/>
            <person name="Root D.E."/>
            <person name="Clish C.B."/>
            <person name="Xavier R.J."/>
        </authorList>
    </citation>
    <scope>FUNCTION</scope>
</reference>
<comment type="function">
    <text evidence="4 5">Catalyzes the phosphorylation of D-fructose 6-phosphate to fructose 1,6-bisphosphate by ATP, the first committing step of glycolysis (By similarity). Negatively regulates the phagocyte oxidative burst in response to bacterial infection by controlling cellular NADPH biosynthesis and NADPH oxidase-derived reactive oxygen species. Upon macrophage activation, drives the metabolic switch toward glycolysis, thus preventing glucose turnover that produces NADPH via pentose phosphate pathway (PubMed:26194095).</text>
</comment>
<comment type="catalytic activity">
    <reaction evidence="4">
        <text>beta-D-fructose 6-phosphate + ATP = beta-D-fructose 1,6-bisphosphate + ADP + H(+)</text>
        <dbReference type="Rhea" id="RHEA:16109"/>
        <dbReference type="ChEBI" id="CHEBI:15378"/>
        <dbReference type="ChEBI" id="CHEBI:30616"/>
        <dbReference type="ChEBI" id="CHEBI:32966"/>
        <dbReference type="ChEBI" id="CHEBI:57634"/>
        <dbReference type="ChEBI" id="CHEBI:456216"/>
        <dbReference type="EC" id="2.7.1.11"/>
    </reaction>
</comment>
<comment type="cofactor">
    <cofactor>
        <name>Mg(2+)</name>
        <dbReference type="ChEBI" id="CHEBI:18420"/>
    </cofactor>
</comment>
<comment type="activity regulation">
    <text evidence="4">Allosterically activated by ADP, AMP, or fructose 2,6-bisphosphate, and allosterically inhibited by ATP or citrate. GlcNAcylation by OGT overcomes allosteric regulation (By similarity).</text>
</comment>
<comment type="pathway">
    <text evidence="4">Carbohydrate degradation; glycolysis; D-glyceraldehyde 3-phosphate and glycerone phosphate from D-glucose: step 3/4.</text>
</comment>
<comment type="subunit">
    <text evidence="4 6">Homo- and heterotetramers (By similarity). Phosphofructokinase (PFK) enzyme functions as a tetramer composed of different combinations of 3 types of subunits, called PFKM (M), PFKL (L) and PFKP (P). The composition of the PFK tetramer differs according to the tissue type it is present in. The kinetic and regulatory properties of the tetrameric enzyme are dependent on the subunit composition, hence can vary across tissues (Probable).</text>
</comment>
<comment type="subcellular location">
    <subcellularLocation>
        <location evidence="4">Cytoplasm</location>
    </subcellularLocation>
</comment>
<comment type="PTM">
    <text evidence="1">GlcNAcylation at Ser-529 by OGT decreases enzyme activity, leading to redirect glucose flux through the oxidative pentose phosphate pathway. Glycosylation is stimulated by both hypoxia and glucose deprivation (By similarity).</text>
</comment>
<comment type="similarity">
    <text evidence="4">Belongs to the phosphofructokinase type A (PFKA) family. ATP-dependent PFK group I subfamily. Eukaryotic two domain clade 'E' sub-subfamily.</text>
</comment>
<dbReference type="EC" id="2.7.1.11" evidence="4"/>
<dbReference type="EMBL" id="J03928">
    <property type="protein sequence ID" value="AAA20076.1"/>
    <property type="molecule type" value="mRNA"/>
</dbReference>
<dbReference type="EMBL" id="AK030511">
    <property type="protein sequence ID" value="BAC26997.1"/>
    <property type="molecule type" value="mRNA"/>
</dbReference>
<dbReference type="EMBL" id="AK036318">
    <property type="protein sequence ID" value="BAC29382.1"/>
    <property type="molecule type" value="mRNA"/>
</dbReference>
<dbReference type="EMBL" id="AK081313">
    <property type="protein sequence ID" value="BAC38193.1"/>
    <property type="molecule type" value="mRNA"/>
</dbReference>
<dbReference type="EMBL" id="AK159328">
    <property type="protein sequence ID" value="BAE34994.1"/>
    <property type="molecule type" value="mRNA"/>
</dbReference>
<dbReference type="EMBL" id="CH466553">
    <property type="protein sequence ID" value="EDL31763.1"/>
    <property type="molecule type" value="Genomic_DNA"/>
</dbReference>
<dbReference type="EMBL" id="BC020097">
    <property type="protein sequence ID" value="AAH20097.1"/>
    <property type="molecule type" value="mRNA"/>
</dbReference>
<dbReference type="CCDS" id="CCDS35955.1"/>
<dbReference type="PIR" id="A31070">
    <property type="entry name" value="A31070"/>
</dbReference>
<dbReference type="RefSeq" id="NP_032852.2">
    <property type="nucleotide sequence ID" value="NM_008826.4"/>
</dbReference>
<dbReference type="SMR" id="P12382"/>
<dbReference type="BioGRID" id="202124">
    <property type="interactions" value="28"/>
</dbReference>
<dbReference type="ComplexPortal" id="CPX-2052">
    <property type="entry name" value="6-phosphofructokinase, L4 homotetramer"/>
</dbReference>
<dbReference type="ComplexPortal" id="CPX-2055">
    <property type="entry name" value="6-phosphofructokinase, ML3 heterotetramer"/>
</dbReference>
<dbReference type="ComplexPortal" id="CPX-2056">
    <property type="entry name" value="6-phosphofructokinase, M2L2 heterotetramer"/>
</dbReference>
<dbReference type="ComplexPortal" id="CPX-2057">
    <property type="entry name" value="6-phosphofructokinase, M3L heterotetramer"/>
</dbReference>
<dbReference type="FunCoup" id="P12382">
    <property type="interactions" value="1628"/>
</dbReference>
<dbReference type="IntAct" id="P12382">
    <property type="interactions" value="10"/>
</dbReference>
<dbReference type="MINT" id="P12382"/>
<dbReference type="STRING" id="10090.ENSMUSP00000020522"/>
<dbReference type="GlyCosmos" id="P12382">
    <property type="glycosylation" value="1 site, No reported glycans"/>
</dbReference>
<dbReference type="GlyGen" id="P12382">
    <property type="glycosylation" value="3 sites, 1 N-linked glycan (1 site), 1 O-linked glycan (1 site)"/>
</dbReference>
<dbReference type="iPTMnet" id="P12382"/>
<dbReference type="PhosphoSitePlus" id="P12382"/>
<dbReference type="SwissPalm" id="P12382"/>
<dbReference type="jPOST" id="P12382"/>
<dbReference type="PaxDb" id="10090-ENSMUSP00000020522"/>
<dbReference type="PeptideAtlas" id="P12382"/>
<dbReference type="ProteomicsDB" id="287686"/>
<dbReference type="Pumba" id="P12382"/>
<dbReference type="Antibodypedia" id="24185">
    <property type="antibodies" value="317 antibodies from 34 providers"/>
</dbReference>
<dbReference type="DNASU" id="18641"/>
<dbReference type="Ensembl" id="ENSMUST00000020522.9">
    <property type="protein sequence ID" value="ENSMUSP00000020522.9"/>
    <property type="gene ID" value="ENSMUSG00000020277.11"/>
</dbReference>
<dbReference type="GeneID" id="18641"/>
<dbReference type="KEGG" id="mmu:18641"/>
<dbReference type="UCSC" id="uc007fwo.2">
    <property type="organism name" value="mouse"/>
</dbReference>
<dbReference type="AGR" id="MGI:97547"/>
<dbReference type="CTD" id="5211"/>
<dbReference type="MGI" id="MGI:97547">
    <property type="gene designation" value="Pfkl"/>
</dbReference>
<dbReference type="VEuPathDB" id="HostDB:ENSMUSG00000020277"/>
<dbReference type="eggNOG" id="KOG2440">
    <property type="taxonomic scope" value="Eukaryota"/>
</dbReference>
<dbReference type="GeneTree" id="ENSGT00940000159292"/>
<dbReference type="HOGENOM" id="CLU_011053_0_0_1"/>
<dbReference type="InParanoid" id="P12382"/>
<dbReference type="OMA" id="LMECVDM"/>
<dbReference type="OrthoDB" id="537915at2759"/>
<dbReference type="PhylomeDB" id="P12382"/>
<dbReference type="TreeFam" id="TF300411"/>
<dbReference type="Reactome" id="R-MMU-6798695">
    <property type="pathway name" value="Neutrophil degranulation"/>
</dbReference>
<dbReference type="Reactome" id="R-MMU-70171">
    <property type="pathway name" value="Glycolysis"/>
</dbReference>
<dbReference type="SABIO-RK" id="P12382"/>
<dbReference type="UniPathway" id="UPA00109">
    <property type="reaction ID" value="UER00182"/>
</dbReference>
<dbReference type="BioGRID-ORCS" id="18641">
    <property type="hits" value="4 hits in 76 CRISPR screens"/>
</dbReference>
<dbReference type="CD-CODE" id="CE726F99">
    <property type="entry name" value="Postsynaptic density"/>
</dbReference>
<dbReference type="ChiTaRS" id="Pfkl">
    <property type="organism name" value="mouse"/>
</dbReference>
<dbReference type="PRO" id="PR:P12382"/>
<dbReference type="Proteomes" id="UP000000589">
    <property type="component" value="Chromosome 10"/>
</dbReference>
<dbReference type="RNAct" id="P12382">
    <property type="molecule type" value="protein"/>
</dbReference>
<dbReference type="Bgee" id="ENSMUSG00000020277">
    <property type="expression patterns" value="Expressed in endoderm of midgut and 297 other cell types or tissues"/>
</dbReference>
<dbReference type="ExpressionAtlas" id="P12382">
    <property type="expression patterns" value="baseline and differential"/>
</dbReference>
<dbReference type="GO" id="GO:0005945">
    <property type="term" value="C:6-phosphofructokinase complex"/>
    <property type="evidence" value="ECO:0007669"/>
    <property type="project" value="Ensembl"/>
</dbReference>
<dbReference type="GO" id="GO:0005829">
    <property type="term" value="C:cytosol"/>
    <property type="evidence" value="ECO:0000314"/>
    <property type="project" value="MGI"/>
</dbReference>
<dbReference type="GO" id="GO:0003872">
    <property type="term" value="F:6-phosphofructokinase activity"/>
    <property type="evidence" value="ECO:0000314"/>
    <property type="project" value="MGI"/>
</dbReference>
<dbReference type="GO" id="GO:0005524">
    <property type="term" value="F:ATP binding"/>
    <property type="evidence" value="ECO:0007669"/>
    <property type="project" value="UniProtKB-KW"/>
</dbReference>
<dbReference type="GO" id="GO:0070061">
    <property type="term" value="F:fructose binding"/>
    <property type="evidence" value="ECO:0007669"/>
    <property type="project" value="Ensembl"/>
</dbReference>
<dbReference type="GO" id="GO:0070095">
    <property type="term" value="F:fructose-6-phosphate binding"/>
    <property type="evidence" value="ECO:0007669"/>
    <property type="project" value="Ensembl"/>
</dbReference>
<dbReference type="GO" id="GO:0042802">
    <property type="term" value="F:identical protein binding"/>
    <property type="evidence" value="ECO:0007669"/>
    <property type="project" value="Ensembl"/>
</dbReference>
<dbReference type="GO" id="GO:0019900">
    <property type="term" value="F:kinase binding"/>
    <property type="evidence" value="ECO:0007669"/>
    <property type="project" value="Ensembl"/>
</dbReference>
<dbReference type="GO" id="GO:0046872">
    <property type="term" value="F:metal ion binding"/>
    <property type="evidence" value="ECO:0007669"/>
    <property type="project" value="UniProtKB-KW"/>
</dbReference>
<dbReference type="GO" id="GO:0030388">
    <property type="term" value="P:fructose 1,6-bisphosphate metabolic process"/>
    <property type="evidence" value="ECO:0000250"/>
    <property type="project" value="UniProtKB"/>
</dbReference>
<dbReference type="GO" id="GO:0006002">
    <property type="term" value="P:fructose 6-phosphate metabolic process"/>
    <property type="evidence" value="ECO:0000314"/>
    <property type="project" value="MGI"/>
</dbReference>
<dbReference type="GO" id="GO:0061615">
    <property type="term" value="P:glycolytic process through fructose-6-phosphate"/>
    <property type="evidence" value="ECO:0000314"/>
    <property type="project" value="MGI"/>
</dbReference>
<dbReference type="GO" id="GO:0046676">
    <property type="term" value="P:negative regulation of insulin secretion"/>
    <property type="evidence" value="ECO:0000314"/>
    <property type="project" value="MGI"/>
</dbReference>
<dbReference type="GO" id="GO:0009749">
    <property type="term" value="P:response to glucose"/>
    <property type="evidence" value="ECO:0000314"/>
    <property type="project" value="MGI"/>
</dbReference>
<dbReference type="CDD" id="cd00764">
    <property type="entry name" value="Eukaryotic_PFK"/>
    <property type="match status" value="1"/>
</dbReference>
<dbReference type="FunFam" id="3.40.50.460:FF:000001">
    <property type="entry name" value="ATP-dependent 6-phosphofructokinase"/>
    <property type="match status" value="1"/>
</dbReference>
<dbReference type="FunFam" id="3.40.50.460:FF:000003">
    <property type="entry name" value="ATP-dependent 6-phosphofructokinase"/>
    <property type="match status" value="1"/>
</dbReference>
<dbReference type="FunFam" id="3.40.50.450:FF:000043">
    <property type="entry name" value="ATP-dependent 6-phosphofructokinase, platelet type"/>
    <property type="match status" value="1"/>
</dbReference>
<dbReference type="Gene3D" id="3.40.50.450">
    <property type="match status" value="2"/>
</dbReference>
<dbReference type="Gene3D" id="3.40.50.460">
    <property type="entry name" value="Phosphofructokinase domain"/>
    <property type="match status" value="2"/>
</dbReference>
<dbReference type="HAMAP" id="MF_03184">
    <property type="entry name" value="Phosphofructokinase_I_E"/>
    <property type="match status" value="1"/>
</dbReference>
<dbReference type="InterPro" id="IPR009161">
    <property type="entry name" value="6-Pfructokinase_euk"/>
</dbReference>
<dbReference type="InterPro" id="IPR022953">
    <property type="entry name" value="ATP_PFK"/>
</dbReference>
<dbReference type="InterPro" id="IPR041914">
    <property type="entry name" value="PFK_vert-type"/>
</dbReference>
<dbReference type="InterPro" id="IPR015912">
    <property type="entry name" value="Phosphofructokinase_CS"/>
</dbReference>
<dbReference type="InterPro" id="IPR000023">
    <property type="entry name" value="Phosphofructokinase_dom"/>
</dbReference>
<dbReference type="InterPro" id="IPR035966">
    <property type="entry name" value="PKF_sf"/>
</dbReference>
<dbReference type="NCBIfam" id="TIGR02478">
    <property type="entry name" value="6PF1K_euk"/>
    <property type="match status" value="1"/>
</dbReference>
<dbReference type="PANTHER" id="PTHR13697:SF14">
    <property type="entry name" value="ATP-DEPENDENT 6-PHOSPHOFRUCTOKINASE, LIVER TYPE"/>
    <property type="match status" value="1"/>
</dbReference>
<dbReference type="PANTHER" id="PTHR13697">
    <property type="entry name" value="PHOSPHOFRUCTOKINASE"/>
    <property type="match status" value="1"/>
</dbReference>
<dbReference type="Pfam" id="PF00365">
    <property type="entry name" value="PFK"/>
    <property type="match status" value="2"/>
</dbReference>
<dbReference type="PIRSF" id="PIRSF000533">
    <property type="entry name" value="ATP_PFK_euk"/>
    <property type="match status" value="1"/>
</dbReference>
<dbReference type="PRINTS" id="PR00476">
    <property type="entry name" value="PHFRCTKINASE"/>
</dbReference>
<dbReference type="SUPFAM" id="SSF53784">
    <property type="entry name" value="Phosphofructokinase"/>
    <property type="match status" value="2"/>
</dbReference>
<dbReference type="PROSITE" id="PS00433">
    <property type="entry name" value="PHOSPHOFRUCTOKINASE"/>
    <property type="match status" value="2"/>
</dbReference>
<organism>
    <name type="scientific">Mus musculus</name>
    <name type="common">Mouse</name>
    <dbReference type="NCBI Taxonomy" id="10090"/>
    <lineage>
        <taxon>Eukaryota</taxon>
        <taxon>Metazoa</taxon>
        <taxon>Chordata</taxon>
        <taxon>Craniata</taxon>
        <taxon>Vertebrata</taxon>
        <taxon>Euteleostomi</taxon>
        <taxon>Mammalia</taxon>
        <taxon>Eutheria</taxon>
        <taxon>Euarchontoglires</taxon>
        <taxon>Glires</taxon>
        <taxon>Rodentia</taxon>
        <taxon>Myomorpha</taxon>
        <taxon>Muroidea</taxon>
        <taxon>Muridae</taxon>
        <taxon>Murinae</taxon>
        <taxon>Mus</taxon>
        <taxon>Mus</taxon>
    </lineage>
</organism>
<feature type="initiator methionine" description="Removed" evidence="2">
    <location>
        <position position="1"/>
    </location>
</feature>
<feature type="chain" id="PRO_0000112022" description="ATP-dependent 6-phosphofructokinase, liver type">
    <location>
        <begin position="2"/>
        <end position="780"/>
    </location>
</feature>
<feature type="region of interest" description="N-terminal catalytic PFK domain 1">
    <location>
        <begin position="2"/>
        <end position="390"/>
    </location>
</feature>
<feature type="region of interest" description="Interdomain linker">
    <location>
        <begin position="391"/>
        <end position="400"/>
    </location>
</feature>
<feature type="region of interest" description="C-terminal regulatory PFK domain 2">
    <location>
        <begin position="401"/>
        <end position="780"/>
    </location>
</feature>
<feature type="active site" description="Proton acceptor" evidence="4">
    <location>
        <position position="166"/>
    </location>
</feature>
<feature type="binding site" evidence="4">
    <location>
        <position position="25"/>
    </location>
    <ligand>
        <name>ATP</name>
        <dbReference type="ChEBI" id="CHEBI:30616"/>
    </ligand>
</feature>
<feature type="binding site" evidence="4">
    <location>
        <begin position="88"/>
        <end position="89"/>
    </location>
    <ligand>
        <name>ATP</name>
        <dbReference type="ChEBI" id="CHEBI:30616"/>
    </ligand>
</feature>
<feature type="binding site" evidence="4">
    <location>
        <begin position="118"/>
        <end position="121"/>
    </location>
    <ligand>
        <name>ATP</name>
        <dbReference type="ChEBI" id="CHEBI:30616"/>
    </ligand>
</feature>
<feature type="binding site" evidence="4">
    <location>
        <position position="119"/>
    </location>
    <ligand>
        <name>Mg(2+)</name>
        <dbReference type="ChEBI" id="CHEBI:18420"/>
        <note>catalytic</note>
    </ligand>
</feature>
<feature type="binding site" description="in other chain" evidence="4">
    <location>
        <begin position="164"/>
        <end position="166"/>
    </location>
    <ligand>
        <name>substrate</name>
        <note>ligand shared between dimeric partners</note>
    </ligand>
</feature>
<feature type="binding site" evidence="4">
    <location>
        <position position="201"/>
    </location>
    <ligand>
        <name>substrate</name>
        <note>ligand shared between dimeric partners</note>
    </ligand>
</feature>
<feature type="binding site" description="in other chain" evidence="4">
    <location>
        <begin position="208"/>
        <end position="210"/>
    </location>
    <ligand>
        <name>substrate</name>
        <note>ligand shared between dimeric partners</note>
    </ligand>
</feature>
<feature type="binding site" description="in other chain" evidence="4">
    <location>
        <position position="264"/>
    </location>
    <ligand>
        <name>substrate</name>
        <note>ligand shared between dimeric partners</note>
    </ligand>
</feature>
<feature type="binding site" evidence="4">
    <location>
        <position position="292"/>
    </location>
    <ligand>
        <name>substrate</name>
        <note>ligand shared between dimeric partners</note>
    </ligand>
</feature>
<feature type="binding site" description="in other chain" evidence="4">
    <location>
        <begin position="298"/>
        <end position="301"/>
    </location>
    <ligand>
        <name>substrate</name>
        <note>ligand shared between dimeric partners</note>
    </ligand>
</feature>
<feature type="binding site" description="in other chain" evidence="4">
    <location>
        <position position="470"/>
    </location>
    <ligand>
        <name>beta-D-fructose 2,6-bisphosphate</name>
        <dbReference type="ChEBI" id="CHEBI:58579"/>
        <note>allosteric activator; ligand shared between dimeric partners</note>
    </ligand>
</feature>
<feature type="binding site" description="in other chain" evidence="4">
    <location>
        <begin position="527"/>
        <end position="531"/>
    </location>
    <ligand>
        <name>beta-D-fructose 2,6-bisphosphate</name>
        <dbReference type="ChEBI" id="CHEBI:58579"/>
        <note>allosteric activator; ligand shared between dimeric partners</note>
    </ligand>
</feature>
<feature type="binding site" evidence="4">
    <location>
        <position position="565"/>
    </location>
    <ligand>
        <name>beta-D-fructose 2,6-bisphosphate</name>
        <dbReference type="ChEBI" id="CHEBI:58579"/>
        <note>allosteric activator; ligand shared between dimeric partners</note>
    </ligand>
</feature>
<feature type="binding site" description="in other chain" evidence="4">
    <location>
        <begin position="572"/>
        <end position="574"/>
    </location>
    <ligand>
        <name>beta-D-fructose 2,6-bisphosphate</name>
        <dbReference type="ChEBI" id="CHEBI:58579"/>
        <note>allosteric activator; ligand shared between dimeric partners</note>
    </ligand>
</feature>
<feature type="binding site" description="in other chain" evidence="4">
    <location>
        <position position="628"/>
    </location>
    <ligand>
        <name>beta-D-fructose 2,6-bisphosphate</name>
        <dbReference type="ChEBI" id="CHEBI:58579"/>
        <note>allosteric activator; ligand shared between dimeric partners</note>
    </ligand>
</feature>
<feature type="binding site" evidence="4">
    <location>
        <position position="654"/>
    </location>
    <ligand>
        <name>beta-D-fructose 2,6-bisphosphate</name>
        <dbReference type="ChEBI" id="CHEBI:58579"/>
        <note>allosteric activator; ligand shared between dimeric partners</note>
    </ligand>
</feature>
<feature type="binding site" description="in other chain" evidence="4">
    <location>
        <begin position="660"/>
        <end position="663"/>
    </location>
    <ligand>
        <name>beta-D-fructose 2,6-bisphosphate</name>
        <dbReference type="ChEBI" id="CHEBI:58579"/>
        <note>allosteric activator; ligand shared between dimeric partners</note>
    </ligand>
</feature>
<feature type="binding site" description="in other chain" evidence="4">
    <location>
        <position position="734"/>
    </location>
    <ligand>
        <name>beta-D-fructose 2,6-bisphosphate</name>
        <dbReference type="ChEBI" id="CHEBI:58579"/>
        <note>allosteric activator; ligand shared between dimeric partners</note>
    </ligand>
</feature>
<feature type="modified residue" description="N-acetylalanine" evidence="2">
    <location>
        <position position="2"/>
    </location>
</feature>
<feature type="modified residue" description="Phosphoserine" evidence="3">
    <location>
        <position position="377"/>
    </location>
</feature>
<feature type="modified residue" description="Phosphotyrosine" evidence="8">
    <location>
        <position position="640"/>
    </location>
</feature>
<feature type="modified residue" description="Phosphoserine" evidence="9">
    <location>
        <position position="775"/>
    </location>
</feature>
<feature type="glycosylation site" description="O-linked (GlcNAc) serine" evidence="1">
    <location>
        <position position="529"/>
    </location>
</feature>
<feature type="sequence conflict" description="In Ref. 1; AAA20076." evidence="6" ref="1">
    <original>R</original>
    <variation>P</variation>
    <location>
        <position position="419"/>
    </location>
</feature>
<keyword id="KW-0007">Acetylation</keyword>
<keyword id="KW-0021">Allosteric enzyme</keyword>
<keyword id="KW-0067">ATP-binding</keyword>
<keyword id="KW-0963">Cytoplasm</keyword>
<keyword id="KW-0903">Direct protein sequencing</keyword>
<keyword id="KW-0324">Glycolysis</keyword>
<keyword id="KW-0325">Glycoprotein</keyword>
<keyword id="KW-0418">Kinase</keyword>
<keyword id="KW-0460">Magnesium</keyword>
<keyword id="KW-0479">Metal-binding</keyword>
<keyword id="KW-0547">Nucleotide-binding</keyword>
<keyword id="KW-0597">Phosphoprotein</keyword>
<keyword id="KW-1185">Reference proteome</keyword>
<keyword id="KW-0808">Transferase</keyword>
<sequence>MATVDLEKLRMSGAGKAIGVLTSGGDAQGMNAAVRAVTRMGIYVGAKVFLIYEGYEGLVEGGENIKPANWLSVSNIIQLGGTIIGSARCKAFTTREGRLAAAYNLLQHGITNLCVIGGDGSLTGANIFRNEWGSLLEELVKEGKISESTAQNYAHLTIAGLVGSIDNDFCGTDMTIGTDSALHRIMEVIDAITTTAQSHQRTFVLEVMGRHCGYLALVSALASGADWLFIPEAPPEDGWENFMCERLGETRSRGSRLNIIIIAEGAIDRHGKPISSSYVKDLVVQRLGFDTRVTVLGHVQRGGTPSAFDRILSSKMGMEAVMALLEATPDTPACVVSLSGNQSVRLPLMECVQVTKDVQKAMDEERFDEAIQLRGRSFENNWKIYKLLAHQKVSKEKSNFSLAILNVGAPAAGMNAAVRSAVRTGISEGHTVYIVHDGFEGLAKGQVQEVGWHDVAGWLGRGGSMLGTKRTLPKPHLEAIVENLRTYNIHALLVIGGFEAYEGVLQLVEARGRYEELCIVMCVIPATISNNVPGTDFSLGSDTAVNAAMESCDRIKQSASGTKRRVFIVETMGGYCGYLATVTGIAVGADAAYVFEDPFNIHDLKANVEHMTEKMKTDIQRGLVLRNEKCHEHYTTEFLYNLYSSEGRGVFDCRTNVLGHLQQGGAPTPFDRNYGTKLGVKAMLWVSEKLRDVYRKGRVFANAPDSACVIGLRKKVVAFSPVTELKKETDFEHRMPREQWWLNLRLMLKMLAHYRISMADYVSGELEHVTRRTLSIDKGF</sequence>
<name>PFKAL_MOUSE</name>
<protein>
    <recommendedName>
        <fullName evidence="4">ATP-dependent 6-phosphofructokinase, liver type</fullName>
        <shortName evidence="4">ATP-PFK</shortName>
        <shortName>PFK-L</shortName>
        <ecNumber evidence="4">2.7.1.11</ecNumber>
    </recommendedName>
    <alternativeName>
        <fullName>6-phosphofructokinase type B</fullName>
    </alternativeName>
    <alternativeName>
        <fullName>Phosphofructo-1-kinase isozyme B</fullName>
        <shortName>PFK-B</shortName>
    </alternativeName>
    <alternativeName>
        <fullName evidence="4">Phosphohexokinase</fullName>
    </alternativeName>
</protein>
<accession>P12382</accession>
<accession>Q8VDX7</accession>